<accession>Q01W31</accession>
<protein>
    <recommendedName>
        <fullName evidence="2">Translation initiation factor IF-2</fullName>
    </recommendedName>
</protein>
<proteinExistence type="inferred from homology"/>
<gene>
    <name evidence="2" type="primary">infB</name>
    <name type="ordered locus">Acid_5181</name>
</gene>
<keyword id="KW-0963">Cytoplasm</keyword>
<keyword id="KW-0342">GTP-binding</keyword>
<keyword id="KW-0396">Initiation factor</keyword>
<keyword id="KW-0547">Nucleotide-binding</keyword>
<keyword id="KW-0648">Protein biosynthesis</keyword>
<feature type="chain" id="PRO_1000008342" description="Translation initiation factor IF-2">
    <location>
        <begin position="1"/>
        <end position="1001"/>
    </location>
</feature>
<feature type="domain" description="tr-type G">
    <location>
        <begin position="499"/>
        <end position="668"/>
    </location>
</feature>
<feature type="region of interest" description="Disordered" evidence="3">
    <location>
        <begin position="56"/>
        <end position="418"/>
    </location>
</feature>
<feature type="region of interest" description="G1" evidence="1">
    <location>
        <begin position="508"/>
        <end position="515"/>
    </location>
</feature>
<feature type="region of interest" description="G2" evidence="1">
    <location>
        <begin position="533"/>
        <end position="537"/>
    </location>
</feature>
<feature type="region of interest" description="G3" evidence="1">
    <location>
        <begin position="554"/>
        <end position="557"/>
    </location>
</feature>
<feature type="region of interest" description="G4" evidence="1">
    <location>
        <begin position="608"/>
        <end position="611"/>
    </location>
</feature>
<feature type="region of interest" description="G5" evidence="1">
    <location>
        <begin position="644"/>
        <end position="646"/>
    </location>
</feature>
<feature type="compositionally biased region" description="Basic and acidic residues" evidence="3">
    <location>
        <begin position="70"/>
        <end position="84"/>
    </location>
</feature>
<feature type="compositionally biased region" description="Low complexity" evidence="3">
    <location>
        <begin position="85"/>
        <end position="108"/>
    </location>
</feature>
<feature type="compositionally biased region" description="Basic and acidic residues" evidence="3">
    <location>
        <begin position="109"/>
        <end position="120"/>
    </location>
</feature>
<feature type="compositionally biased region" description="Pro residues" evidence="3">
    <location>
        <begin position="136"/>
        <end position="170"/>
    </location>
</feature>
<feature type="compositionally biased region" description="Pro residues" evidence="3">
    <location>
        <begin position="180"/>
        <end position="194"/>
    </location>
</feature>
<feature type="compositionally biased region" description="Pro residues" evidence="3">
    <location>
        <begin position="204"/>
        <end position="217"/>
    </location>
</feature>
<feature type="compositionally biased region" description="Pro residues" evidence="3">
    <location>
        <begin position="229"/>
        <end position="252"/>
    </location>
</feature>
<feature type="compositionally biased region" description="Pro residues" evidence="3">
    <location>
        <begin position="305"/>
        <end position="322"/>
    </location>
</feature>
<feature type="compositionally biased region" description="Pro residues" evidence="3">
    <location>
        <begin position="345"/>
        <end position="357"/>
    </location>
</feature>
<feature type="compositionally biased region" description="Basic and acidic residues" evidence="3">
    <location>
        <begin position="379"/>
        <end position="410"/>
    </location>
</feature>
<feature type="binding site" evidence="2">
    <location>
        <begin position="508"/>
        <end position="515"/>
    </location>
    <ligand>
        <name>GTP</name>
        <dbReference type="ChEBI" id="CHEBI:37565"/>
    </ligand>
</feature>
<feature type="binding site" evidence="2">
    <location>
        <begin position="554"/>
        <end position="558"/>
    </location>
    <ligand>
        <name>GTP</name>
        <dbReference type="ChEBI" id="CHEBI:37565"/>
    </ligand>
</feature>
<feature type="binding site" evidence="2">
    <location>
        <begin position="608"/>
        <end position="611"/>
    </location>
    <ligand>
        <name>GTP</name>
        <dbReference type="ChEBI" id="CHEBI:37565"/>
    </ligand>
</feature>
<comment type="function">
    <text evidence="2">One of the essential components for the initiation of protein synthesis. Protects formylmethionyl-tRNA from spontaneous hydrolysis and promotes its binding to the 30S ribosomal subunits. Also involved in the hydrolysis of GTP during the formation of the 70S ribosomal complex.</text>
</comment>
<comment type="subcellular location">
    <subcellularLocation>
        <location evidence="2">Cytoplasm</location>
    </subcellularLocation>
</comment>
<comment type="similarity">
    <text evidence="2">Belongs to the TRAFAC class translation factor GTPase superfamily. Classic translation factor GTPase family. IF-2 subfamily.</text>
</comment>
<evidence type="ECO:0000250" key="1"/>
<evidence type="ECO:0000255" key="2">
    <source>
        <dbReference type="HAMAP-Rule" id="MF_00100"/>
    </source>
</evidence>
<evidence type="ECO:0000256" key="3">
    <source>
        <dbReference type="SAM" id="MobiDB-lite"/>
    </source>
</evidence>
<reference key="1">
    <citation type="journal article" date="2009" name="Appl. Environ. Microbiol.">
        <title>Three genomes from the phylum Acidobacteria provide insight into the lifestyles of these microorganisms in soils.</title>
        <authorList>
            <person name="Ward N.L."/>
            <person name="Challacombe J.F."/>
            <person name="Janssen P.H."/>
            <person name="Henrissat B."/>
            <person name="Coutinho P.M."/>
            <person name="Wu M."/>
            <person name="Xie G."/>
            <person name="Haft D.H."/>
            <person name="Sait M."/>
            <person name="Badger J."/>
            <person name="Barabote R.D."/>
            <person name="Bradley B."/>
            <person name="Brettin T.S."/>
            <person name="Brinkac L.M."/>
            <person name="Bruce D."/>
            <person name="Creasy T."/>
            <person name="Daugherty S.C."/>
            <person name="Davidsen T.M."/>
            <person name="DeBoy R.T."/>
            <person name="Detter J.C."/>
            <person name="Dodson R.J."/>
            <person name="Durkin A.S."/>
            <person name="Ganapathy A."/>
            <person name="Gwinn-Giglio M."/>
            <person name="Han C.S."/>
            <person name="Khouri H."/>
            <person name="Kiss H."/>
            <person name="Kothari S.P."/>
            <person name="Madupu R."/>
            <person name="Nelson K.E."/>
            <person name="Nelson W.C."/>
            <person name="Paulsen I."/>
            <person name="Penn K."/>
            <person name="Ren Q."/>
            <person name="Rosovitz M.J."/>
            <person name="Selengut J.D."/>
            <person name="Shrivastava S."/>
            <person name="Sullivan S.A."/>
            <person name="Tapia R."/>
            <person name="Thompson L.S."/>
            <person name="Watkins K.L."/>
            <person name="Yang Q."/>
            <person name="Yu C."/>
            <person name="Zafar N."/>
            <person name="Zhou L."/>
            <person name="Kuske C.R."/>
        </authorList>
    </citation>
    <scope>NUCLEOTIDE SEQUENCE [LARGE SCALE GENOMIC DNA]</scope>
    <source>
        <strain>Ellin6076</strain>
    </source>
</reference>
<dbReference type="EMBL" id="CP000473">
    <property type="protein sequence ID" value="ABJ86134.1"/>
    <property type="molecule type" value="Genomic_DNA"/>
</dbReference>
<dbReference type="SMR" id="Q01W31"/>
<dbReference type="FunCoup" id="Q01W31">
    <property type="interactions" value="683"/>
</dbReference>
<dbReference type="STRING" id="234267.Acid_5181"/>
<dbReference type="KEGG" id="sus:Acid_5181"/>
<dbReference type="eggNOG" id="COG0532">
    <property type="taxonomic scope" value="Bacteria"/>
</dbReference>
<dbReference type="eggNOG" id="COG3266">
    <property type="taxonomic scope" value="Bacteria"/>
</dbReference>
<dbReference type="HOGENOM" id="CLU_006301_5_1_0"/>
<dbReference type="InParanoid" id="Q01W31"/>
<dbReference type="OrthoDB" id="9811804at2"/>
<dbReference type="GO" id="GO:0005829">
    <property type="term" value="C:cytosol"/>
    <property type="evidence" value="ECO:0007669"/>
    <property type="project" value="TreeGrafter"/>
</dbReference>
<dbReference type="GO" id="GO:0005525">
    <property type="term" value="F:GTP binding"/>
    <property type="evidence" value="ECO:0007669"/>
    <property type="project" value="UniProtKB-KW"/>
</dbReference>
<dbReference type="GO" id="GO:0003924">
    <property type="term" value="F:GTPase activity"/>
    <property type="evidence" value="ECO:0007669"/>
    <property type="project" value="UniProtKB-UniRule"/>
</dbReference>
<dbReference type="GO" id="GO:0003743">
    <property type="term" value="F:translation initiation factor activity"/>
    <property type="evidence" value="ECO:0007669"/>
    <property type="project" value="UniProtKB-UniRule"/>
</dbReference>
<dbReference type="CDD" id="cd01887">
    <property type="entry name" value="IF2_eIF5B"/>
    <property type="match status" value="1"/>
</dbReference>
<dbReference type="CDD" id="cd03702">
    <property type="entry name" value="IF2_mtIF2_II"/>
    <property type="match status" value="1"/>
</dbReference>
<dbReference type="CDD" id="cd03692">
    <property type="entry name" value="mtIF2_IVc"/>
    <property type="match status" value="1"/>
</dbReference>
<dbReference type="FunFam" id="2.40.30.10:FF:000007">
    <property type="entry name" value="Translation initiation factor IF-2"/>
    <property type="match status" value="1"/>
</dbReference>
<dbReference type="FunFam" id="2.40.30.10:FF:000008">
    <property type="entry name" value="Translation initiation factor IF-2"/>
    <property type="match status" value="1"/>
</dbReference>
<dbReference type="FunFam" id="3.40.50.10050:FF:000001">
    <property type="entry name" value="Translation initiation factor IF-2"/>
    <property type="match status" value="1"/>
</dbReference>
<dbReference type="FunFam" id="3.40.50.300:FF:000019">
    <property type="entry name" value="Translation initiation factor IF-2"/>
    <property type="match status" value="1"/>
</dbReference>
<dbReference type="Gene3D" id="1.10.10.2480">
    <property type="match status" value="1"/>
</dbReference>
<dbReference type="Gene3D" id="3.40.50.300">
    <property type="entry name" value="P-loop containing nucleotide triphosphate hydrolases"/>
    <property type="match status" value="1"/>
</dbReference>
<dbReference type="Gene3D" id="2.40.30.10">
    <property type="entry name" value="Translation factors"/>
    <property type="match status" value="2"/>
</dbReference>
<dbReference type="Gene3D" id="3.40.50.10050">
    <property type="entry name" value="Translation initiation factor IF- 2, domain 3"/>
    <property type="match status" value="1"/>
</dbReference>
<dbReference type="HAMAP" id="MF_00100_B">
    <property type="entry name" value="IF_2_B"/>
    <property type="match status" value="1"/>
</dbReference>
<dbReference type="InterPro" id="IPR053905">
    <property type="entry name" value="EF-G-like_DII"/>
</dbReference>
<dbReference type="InterPro" id="IPR044145">
    <property type="entry name" value="IF2_II"/>
</dbReference>
<dbReference type="InterPro" id="IPR006847">
    <property type="entry name" value="IF2_N"/>
</dbReference>
<dbReference type="InterPro" id="IPR027417">
    <property type="entry name" value="P-loop_NTPase"/>
</dbReference>
<dbReference type="InterPro" id="IPR005225">
    <property type="entry name" value="Small_GTP-bd"/>
</dbReference>
<dbReference type="InterPro" id="IPR000795">
    <property type="entry name" value="T_Tr_GTP-bd_dom"/>
</dbReference>
<dbReference type="InterPro" id="IPR000178">
    <property type="entry name" value="TF_IF2_bacterial-like"/>
</dbReference>
<dbReference type="InterPro" id="IPR015760">
    <property type="entry name" value="TIF_IF2"/>
</dbReference>
<dbReference type="InterPro" id="IPR023115">
    <property type="entry name" value="TIF_IF2_dom3"/>
</dbReference>
<dbReference type="InterPro" id="IPR036925">
    <property type="entry name" value="TIF_IF2_dom3_sf"/>
</dbReference>
<dbReference type="InterPro" id="IPR009000">
    <property type="entry name" value="Transl_B-barrel_sf"/>
</dbReference>
<dbReference type="NCBIfam" id="TIGR00487">
    <property type="entry name" value="IF-2"/>
    <property type="match status" value="1"/>
</dbReference>
<dbReference type="NCBIfam" id="TIGR00231">
    <property type="entry name" value="small_GTP"/>
    <property type="match status" value="1"/>
</dbReference>
<dbReference type="PANTHER" id="PTHR43381:SF5">
    <property type="entry name" value="TR-TYPE G DOMAIN-CONTAINING PROTEIN"/>
    <property type="match status" value="1"/>
</dbReference>
<dbReference type="PANTHER" id="PTHR43381">
    <property type="entry name" value="TRANSLATION INITIATION FACTOR IF-2-RELATED"/>
    <property type="match status" value="1"/>
</dbReference>
<dbReference type="Pfam" id="PF22042">
    <property type="entry name" value="EF-G_D2"/>
    <property type="match status" value="1"/>
</dbReference>
<dbReference type="Pfam" id="PF00009">
    <property type="entry name" value="GTP_EFTU"/>
    <property type="match status" value="1"/>
</dbReference>
<dbReference type="Pfam" id="PF11987">
    <property type="entry name" value="IF-2"/>
    <property type="match status" value="1"/>
</dbReference>
<dbReference type="Pfam" id="PF04760">
    <property type="entry name" value="IF2_N"/>
    <property type="match status" value="2"/>
</dbReference>
<dbReference type="SUPFAM" id="SSF52156">
    <property type="entry name" value="Initiation factor IF2/eIF5b, domain 3"/>
    <property type="match status" value="1"/>
</dbReference>
<dbReference type="SUPFAM" id="SSF52540">
    <property type="entry name" value="P-loop containing nucleoside triphosphate hydrolases"/>
    <property type="match status" value="1"/>
</dbReference>
<dbReference type="SUPFAM" id="SSF50447">
    <property type="entry name" value="Translation proteins"/>
    <property type="match status" value="2"/>
</dbReference>
<dbReference type="PROSITE" id="PS51722">
    <property type="entry name" value="G_TR_2"/>
    <property type="match status" value="1"/>
</dbReference>
<dbReference type="PROSITE" id="PS01176">
    <property type="entry name" value="IF2"/>
    <property type="match status" value="1"/>
</dbReference>
<sequence>MKKIRINELARELEVKAHEILERLPELGVTEKKTHSSSIDEDVAIKLRQYYGQDVPDYVHDPNAVDEPATEAHEERHEHEEAHEPAAAPKAAVEPETPVAPAPEAAPAAKEERPAPEEPARPMAPIRPPLASGRPIHPPVGATPPPRPEGPRAAPAPPLPPPAPQVPHAPSPAASSPAMPARPEPPAHHPPSQTPPAAVFAPGRPAPPSAKPLPTTTPRPGQVLSGPRQPFPSSPAPGAPQRPQAIPRPPQQVRPESQRPSGPGAPSAPQRPLAGQPAARPVVPPRPDLVAKLSAPRAPVMPQQPAAPRPGVPKAPSAPVPGQPIYRGPIRPGQPMVAKPGVRPGMPPSRPGGPRPQHPTSRGRIEPGMGAPPPPAEPSRGRPGDRRPVRQQRERTEEEKILRPQRRHVEAGPPPISREITISEGITVKELSEKLDVKANLVMKKLMDRGIFVAINQTLDGKLATEVARDFGASTATVSYEVEAMQSVEEAQDTTDLERRAPVVTIMGHVDHGKTSLLDAIREANVAGREAGGITQHIGAYQVEMKGRKIVFIDTPGHEAFTRMRSRGAKVTDIVILVVAADDGVMPQTLEAIDHAKAAAVPIIVAINKIDKADAQPERIKQQLSDRGLLPEDWGGDVVMVPVSARTQQGLPDLLEMILLVADMQDLKANPSRPAMGTVIEAQLDRGRGPVATVLVRNGTLSVGDFFICGAVFGKVRAMLNDRGTQIRKAEPSTPVEVLGLDSLPEAGDDFQVVTDTAKAKQIVNFRDQRQKEAALAKSSRITLEQLHQQMREGEVKELPVIIKADVGGSAEVLKETLEKLSNDKVKVRVIHSGVGAINESDILLASASNAIVIGFNVRPERNAAATAEQEKVDVRLHTIIYNLTDEIKRAMSGLLAPVFKEVYRGKAEVRETFRISKVGAVAGCQVIDGSIPRDSECRVLRDNIVVHTGKIGSLRRFKDDVSEVKIGMECGITLANFADLKQGDIIEAFATERVATEVFA</sequence>
<organism>
    <name type="scientific">Solibacter usitatus (strain Ellin6076)</name>
    <dbReference type="NCBI Taxonomy" id="234267"/>
    <lineage>
        <taxon>Bacteria</taxon>
        <taxon>Pseudomonadati</taxon>
        <taxon>Acidobacteriota</taxon>
        <taxon>Terriglobia</taxon>
        <taxon>Bryobacterales</taxon>
        <taxon>Solibacteraceae</taxon>
        <taxon>Candidatus Solibacter</taxon>
    </lineage>
</organism>
<name>IF2_SOLUE</name>